<comment type="function">
    <text evidence="3 6 7">Essential for murein biosynthesis (PubMed:29280348). Probably catalyzes the conversion of L-2-acetamido-6-oxopimelate to N-acetyl-LL-2,6-diaminopimelate (Probable).</text>
</comment>
<comment type="catalytic activity">
    <reaction evidence="6">
        <text>N-acetyl-(2S,6S)-2,6-diaminopimelate + 2-oxoglutarate = L-2-acetamido-6-oxoheptanedioate + L-glutamate</text>
        <dbReference type="Rhea" id="RHEA:25315"/>
        <dbReference type="ChEBI" id="CHEBI:16810"/>
        <dbReference type="ChEBI" id="CHEBI:29985"/>
        <dbReference type="ChEBI" id="CHEBI:58117"/>
        <dbReference type="ChEBI" id="CHEBI:58767"/>
    </reaction>
</comment>
<comment type="cofactor">
    <cofactor evidence="2">
        <name>pyridoxal 5'-phosphate</name>
        <dbReference type="ChEBI" id="CHEBI:597326"/>
    </cofactor>
</comment>
<comment type="pathway">
    <text evidence="6">Amino-acid biosynthesis; L-lysine biosynthesis via DAP pathway; LL-2,6-diaminopimelate from (S)-tetrahydrodipicolinate (acetylase route): step 2/3.</text>
</comment>
<comment type="subunit">
    <text evidence="2">Homodimer.</text>
</comment>
<comment type="subcellular location">
    <subcellularLocation>
        <location evidence="5">Cytoplasm</location>
    </subcellularLocation>
</comment>
<comment type="similarity">
    <text evidence="5">Belongs to the class-I pyridoxal-phosphate-dependent aminotransferase family.</text>
</comment>
<name>DAPX_BACSU</name>
<sequence>MEHLLNPKAREIEISGIRKFSNLVAQHEDVISLTIGQPDFFTPHHVKAAAKKAIDENVTSYTPNAGYLELRQAVQLYMKKKADFNYDAESEIIITTGASQAIDAAFRTILSPGDEVIMPGPIYPGYEPIINLCGAKPVIVDTTSHGFKLTARLIEDALTPNTKCVVLPYPSNPTGVTLSEEELKSIAALLKGRNVFVLSDEIYSELTYDRPHYSIATYLRDQTIVINGLSKSHSMTGWRIGFLFAPKDIAKHILKVHQYNVSCASSISQKAALEAVTNGFDDALIMREQYKKRLDYVYDRLVSMGLDVVKPSGAFYIFPSIKSFGMTSFDFSMALLEDAGVALVPGSSFSTYGEGYVRLSFACSMDTLREGLDRLELFVLKKREAMQTINNGV</sequence>
<keyword id="KW-0028">Amino-acid biosynthesis</keyword>
<keyword id="KW-0032">Aminotransferase</keyword>
<keyword id="KW-0963">Cytoplasm</keyword>
<keyword id="KW-0220">Diaminopimelate biosynthesis</keyword>
<keyword id="KW-0457">Lysine biosynthesis</keyword>
<keyword id="KW-0663">Pyridoxal phosphate</keyword>
<keyword id="KW-1185">Reference proteome</keyword>
<keyword id="KW-0808">Transferase</keyword>
<gene>
    <name evidence="4" type="primary">dapX</name>
    <name type="synonym">patA</name>
    <name type="synonym">uat</name>
    <name type="ordered locus">BSU14000</name>
</gene>
<protein>
    <recommendedName>
        <fullName evidence="5">Probable N-acetyl-LL-diaminopimelate aminotransferase</fullName>
        <ecNumber evidence="6">2.6.1.-</ecNumber>
    </recommendedName>
    <alternativeName>
        <fullName>Putative aminotransferase A</fullName>
    </alternativeName>
</protein>
<organism>
    <name type="scientific">Bacillus subtilis (strain 168)</name>
    <dbReference type="NCBI Taxonomy" id="224308"/>
    <lineage>
        <taxon>Bacteria</taxon>
        <taxon>Bacillati</taxon>
        <taxon>Bacillota</taxon>
        <taxon>Bacilli</taxon>
        <taxon>Bacillales</taxon>
        <taxon>Bacillaceae</taxon>
        <taxon>Bacillus</taxon>
    </lineage>
</organism>
<reference key="1">
    <citation type="submission" date="1997-11" db="EMBL/GenBank/DDBJ databases">
        <title>Sequence of the Bacillus subtilis chromosome from ykuA to cse-15.</title>
        <authorList>
            <person name="Scanlan E."/>
            <person name="Devine K.M."/>
        </authorList>
    </citation>
    <scope>NUCLEOTIDE SEQUENCE [GENOMIC DNA]</scope>
    <source>
        <strain>168</strain>
    </source>
</reference>
<reference key="2">
    <citation type="journal article" date="1997" name="Nature">
        <title>The complete genome sequence of the Gram-positive bacterium Bacillus subtilis.</title>
        <authorList>
            <person name="Kunst F."/>
            <person name="Ogasawara N."/>
            <person name="Moszer I."/>
            <person name="Albertini A.M."/>
            <person name="Alloni G."/>
            <person name="Azevedo V."/>
            <person name="Bertero M.G."/>
            <person name="Bessieres P."/>
            <person name="Bolotin A."/>
            <person name="Borchert S."/>
            <person name="Borriss R."/>
            <person name="Boursier L."/>
            <person name="Brans A."/>
            <person name="Braun M."/>
            <person name="Brignell S.C."/>
            <person name="Bron S."/>
            <person name="Brouillet S."/>
            <person name="Bruschi C.V."/>
            <person name="Caldwell B."/>
            <person name="Capuano V."/>
            <person name="Carter N.M."/>
            <person name="Choi S.-K."/>
            <person name="Codani J.-J."/>
            <person name="Connerton I.F."/>
            <person name="Cummings N.J."/>
            <person name="Daniel R.A."/>
            <person name="Denizot F."/>
            <person name="Devine K.M."/>
            <person name="Duesterhoeft A."/>
            <person name="Ehrlich S.D."/>
            <person name="Emmerson P.T."/>
            <person name="Entian K.-D."/>
            <person name="Errington J."/>
            <person name="Fabret C."/>
            <person name="Ferrari E."/>
            <person name="Foulger D."/>
            <person name="Fritz C."/>
            <person name="Fujita M."/>
            <person name="Fujita Y."/>
            <person name="Fuma S."/>
            <person name="Galizzi A."/>
            <person name="Galleron N."/>
            <person name="Ghim S.-Y."/>
            <person name="Glaser P."/>
            <person name="Goffeau A."/>
            <person name="Golightly E.J."/>
            <person name="Grandi G."/>
            <person name="Guiseppi G."/>
            <person name="Guy B.J."/>
            <person name="Haga K."/>
            <person name="Haiech J."/>
            <person name="Harwood C.R."/>
            <person name="Henaut A."/>
            <person name="Hilbert H."/>
            <person name="Holsappel S."/>
            <person name="Hosono S."/>
            <person name="Hullo M.-F."/>
            <person name="Itaya M."/>
            <person name="Jones L.-M."/>
            <person name="Joris B."/>
            <person name="Karamata D."/>
            <person name="Kasahara Y."/>
            <person name="Klaerr-Blanchard M."/>
            <person name="Klein C."/>
            <person name="Kobayashi Y."/>
            <person name="Koetter P."/>
            <person name="Koningstein G."/>
            <person name="Krogh S."/>
            <person name="Kumano M."/>
            <person name="Kurita K."/>
            <person name="Lapidus A."/>
            <person name="Lardinois S."/>
            <person name="Lauber J."/>
            <person name="Lazarevic V."/>
            <person name="Lee S.-M."/>
            <person name="Levine A."/>
            <person name="Liu H."/>
            <person name="Masuda S."/>
            <person name="Mauel C."/>
            <person name="Medigue C."/>
            <person name="Medina N."/>
            <person name="Mellado R.P."/>
            <person name="Mizuno M."/>
            <person name="Moestl D."/>
            <person name="Nakai S."/>
            <person name="Noback M."/>
            <person name="Noone D."/>
            <person name="O'Reilly M."/>
            <person name="Ogawa K."/>
            <person name="Ogiwara A."/>
            <person name="Oudega B."/>
            <person name="Park S.-H."/>
            <person name="Parro V."/>
            <person name="Pohl T.M."/>
            <person name="Portetelle D."/>
            <person name="Porwollik S."/>
            <person name="Prescott A.M."/>
            <person name="Presecan E."/>
            <person name="Pujic P."/>
            <person name="Purnelle B."/>
            <person name="Rapoport G."/>
            <person name="Rey M."/>
            <person name="Reynolds S."/>
            <person name="Rieger M."/>
            <person name="Rivolta C."/>
            <person name="Rocha E."/>
            <person name="Roche B."/>
            <person name="Rose M."/>
            <person name="Sadaie Y."/>
            <person name="Sato T."/>
            <person name="Scanlan E."/>
            <person name="Schleich S."/>
            <person name="Schroeter R."/>
            <person name="Scoffone F."/>
            <person name="Sekiguchi J."/>
            <person name="Sekowska A."/>
            <person name="Seror S.J."/>
            <person name="Serror P."/>
            <person name="Shin B.-S."/>
            <person name="Soldo B."/>
            <person name="Sorokin A."/>
            <person name="Tacconi E."/>
            <person name="Takagi T."/>
            <person name="Takahashi H."/>
            <person name="Takemaru K."/>
            <person name="Takeuchi M."/>
            <person name="Tamakoshi A."/>
            <person name="Tanaka T."/>
            <person name="Terpstra P."/>
            <person name="Tognoni A."/>
            <person name="Tosato V."/>
            <person name="Uchiyama S."/>
            <person name="Vandenbol M."/>
            <person name="Vannier F."/>
            <person name="Vassarotti A."/>
            <person name="Viari A."/>
            <person name="Wambutt R."/>
            <person name="Wedler E."/>
            <person name="Wedler H."/>
            <person name="Weitzenegger T."/>
            <person name="Winters P."/>
            <person name="Wipat A."/>
            <person name="Yamamoto H."/>
            <person name="Yamane K."/>
            <person name="Yasumoto K."/>
            <person name="Yata K."/>
            <person name="Yoshida K."/>
            <person name="Yoshikawa H.-F."/>
            <person name="Zumstein E."/>
            <person name="Yoshikawa H."/>
            <person name="Danchin A."/>
        </authorList>
    </citation>
    <scope>NUCLEOTIDE SEQUENCE [LARGE SCALE GENOMIC DNA]</scope>
    <source>
        <strain>168</strain>
    </source>
</reference>
<reference key="3">
    <citation type="journal article" date="2009" name="Microbiology">
        <title>From a consortium sequence to a unified sequence: the Bacillus subtilis 168 reference genome a decade later.</title>
        <authorList>
            <person name="Barbe V."/>
            <person name="Cruveiller S."/>
            <person name="Kunst F."/>
            <person name="Lenoble P."/>
            <person name="Meurice G."/>
            <person name="Sekowska A."/>
            <person name="Vallenet D."/>
            <person name="Wang T."/>
            <person name="Moszer I."/>
            <person name="Medigue C."/>
            <person name="Danchin A."/>
        </authorList>
    </citation>
    <scope>SEQUENCE REVISION TO 99 AND 280</scope>
</reference>
<reference key="4">
    <citation type="journal article" date="1990" name="J. Bacteriol.">
        <title>The spoIIJ gene, which regulates early developmental steps in Bacillus subtilis, belongs to a class of environmentally responsive genes.</title>
        <authorList>
            <person name="Antoniewski C."/>
            <person name="Savelli B."/>
            <person name="Stragier P."/>
        </authorList>
    </citation>
    <scope>NUCLEOTIDE SEQUENCE [GENOMIC DNA] OF 362-393</scope>
</reference>
<reference key="5">
    <citation type="journal article" date="2003" name="Nucleic Acids Res.">
        <title>Regulation of lysine biosynthesis and transport genes in bacteria: yet another RNA riboswitch?</title>
        <authorList>
            <person name="Rodionov D.A."/>
            <person name="Vitreschak A.G."/>
            <person name="Mironov A.A."/>
            <person name="Gelfand M.S."/>
        </authorList>
    </citation>
    <scope>PUTATIVE FUNCTION</scope>
</reference>
<reference key="6">
    <citation type="submission" date="2008-12" db="UniProtKB">
        <authorList>
            <person name="Danchin A."/>
        </authorList>
    </citation>
    <scope>FUNCTION IN LYSINE BIOSYNTHESIS</scope>
</reference>
<reference key="7">
    <citation type="journal article" date="2018" name="Microb. Biotechnol.">
        <title>Bacillus subtilis, the model Gram-positive bacterium: 20 years of annotation refinement.</title>
        <authorList>
            <person name="Borriss R."/>
            <person name="Danchin A."/>
            <person name="Harwood C.R."/>
            <person name="Medigue C."/>
            <person name="Rocha E.P.C."/>
            <person name="Sekowska A."/>
            <person name="Vallenet D."/>
        </authorList>
    </citation>
    <scope>FUNCTION</scope>
    <scope>CATALYTIC ACTIVITY</scope>
    <scope>PATHWAY</scope>
</reference>
<feature type="chain" id="PRO_0000123922" description="Probable N-acetyl-LL-diaminopimelate aminotransferase">
    <location>
        <begin position="1"/>
        <end position="393"/>
    </location>
</feature>
<feature type="modified residue" description="N6-(pyridoxal phosphate)lysine" evidence="1">
    <location>
        <position position="231"/>
    </location>
</feature>
<feature type="sequence conflict" description="In Ref. 1; CAA10863." evidence="5" ref="1">
    <location>
        <position position="99"/>
    </location>
</feature>
<feature type="sequence conflict" description="In Ref. 1; CAA10863." evidence="5" ref="1">
    <original>F</original>
    <variation>L</variation>
    <location>
        <position position="280"/>
    </location>
</feature>
<evidence type="ECO:0000250" key="1"/>
<evidence type="ECO:0000250" key="2">
    <source>
        <dbReference type="UniProtKB" id="H3ZPU1"/>
    </source>
</evidence>
<evidence type="ECO:0000269" key="3">
    <source>
    </source>
</evidence>
<evidence type="ECO:0000303" key="4">
    <source>
    </source>
</evidence>
<evidence type="ECO:0000305" key="5"/>
<evidence type="ECO:0000305" key="6">
    <source>
    </source>
</evidence>
<evidence type="ECO:0000305" key="7">
    <source ref="6"/>
</evidence>
<accession>P16524</accession>
<proteinExistence type="evidence at protein level"/>
<dbReference type="EC" id="2.6.1.-" evidence="6"/>
<dbReference type="EMBL" id="AJ222587">
    <property type="protein sequence ID" value="CAA10863.1"/>
    <property type="molecule type" value="Genomic_DNA"/>
</dbReference>
<dbReference type="EMBL" id="AL009126">
    <property type="protein sequence ID" value="CAB13273.2"/>
    <property type="molecule type" value="Genomic_DNA"/>
</dbReference>
<dbReference type="EMBL" id="M29450">
    <property type="protein sequence ID" value="AAA22801.1"/>
    <property type="molecule type" value="Genomic_DNA"/>
</dbReference>
<dbReference type="PIR" id="C69672">
    <property type="entry name" value="C69672"/>
</dbReference>
<dbReference type="RefSeq" id="NP_389283.2">
    <property type="nucleotide sequence ID" value="NC_000964.3"/>
</dbReference>
<dbReference type="RefSeq" id="WP_003232415.1">
    <property type="nucleotide sequence ID" value="NZ_OZ025638.1"/>
</dbReference>
<dbReference type="SMR" id="P16524"/>
<dbReference type="FunCoup" id="P16524">
    <property type="interactions" value="504"/>
</dbReference>
<dbReference type="STRING" id="224308.BSU14000"/>
<dbReference type="PaxDb" id="224308-BSU14000"/>
<dbReference type="EnsemblBacteria" id="CAB13273">
    <property type="protein sequence ID" value="CAB13273"/>
    <property type="gene ID" value="BSU_14000"/>
</dbReference>
<dbReference type="GeneID" id="939235"/>
<dbReference type="KEGG" id="bsu:BSU14000"/>
<dbReference type="PATRIC" id="fig|224308.179.peg.1526"/>
<dbReference type="eggNOG" id="COG0436">
    <property type="taxonomic scope" value="Bacteria"/>
</dbReference>
<dbReference type="InParanoid" id="P16524"/>
<dbReference type="OrthoDB" id="9802328at2"/>
<dbReference type="PhylomeDB" id="P16524"/>
<dbReference type="BioCyc" id="BSUB:BSU14000-MONOMER"/>
<dbReference type="BioCyc" id="MetaCyc:BSU14000-MONOMER"/>
<dbReference type="UniPathway" id="UPA00034">
    <property type="reaction ID" value="UER00023"/>
</dbReference>
<dbReference type="Proteomes" id="UP000001570">
    <property type="component" value="Chromosome"/>
</dbReference>
<dbReference type="GO" id="GO:0005737">
    <property type="term" value="C:cytoplasm"/>
    <property type="evidence" value="ECO:0007669"/>
    <property type="project" value="UniProtKB-SubCell"/>
</dbReference>
<dbReference type="GO" id="GO:0030170">
    <property type="term" value="F:pyridoxal phosphate binding"/>
    <property type="evidence" value="ECO:0007669"/>
    <property type="project" value="InterPro"/>
</dbReference>
<dbReference type="GO" id="GO:0008483">
    <property type="term" value="F:transaminase activity"/>
    <property type="evidence" value="ECO:0000318"/>
    <property type="project" value="GO_Central"/>
</dbReference>
<dbReference type="GO" id="GO:0006520">
    <property type="term" value="P:amino acid metabolic process"/>
    <property type="evidence" value="ECO:0000318"/>
    <property type="project" value="GO_Central"/>
</dbReference>
<dbReference type="GO" id="GO:0019877">
    <property type="term" value="P:diaminopimelate biosynthetic process"/>
    <property type="evidence" value="ECO:0007669"/>
    <property type="project" value="UniProtKB-KW"/>
</dbReference>
<dbReference type="GO" id="GO:0009089">
    <property type="term" value="P:lysine biosynthetic process via diaminopimelate"/>
    <property type="evidence" value="ECO:0007669"/>
    <property type="project" value="UniProtKB-UniPathway"/>
</dbReference>
<dbReference type="CDD" id="cd00609">
    <property type="entry name" value="AAT_like"/>
    <property type="match status" value="1"/>
</dbReference>
<dbReference type="FunFam" id="3.40.640.10:FF:000033">
    <property type="entry name" value="Aspartate aminotransferase"/>
    <property type="match status" value="1"/>
</dbReference>
<dbReference type="Gene3D" id="3.90.1150.10">
    <property type="entry name" value="Aspartate Aminotransferase, domain 1"/>
    <property type="match status" value="1"/>
</dbReference>
<dbReference type="Gene3D" id="3.40.640.10">
    <property type="entry name" value="Type I PLP-dependent aspartate aminotransferase-like (Major domain)"/>
    <property type="match status" value="1"/>
</dbReference>
<dbReference type="InterPro" id="IPR004839">
    <property type="entry name" value="Aminotransferase_I/II_large"/>
</dbReference>
<dbReference type="InterPro" id="IPR050596">
    <property type="entry name" value="AspAT/PAT-like"/>
</dbReference>
<dbReference type="InterPro" id="IPR004838">
    <property type="entry name" value="NHTrfase_class1_PyrdxlP-BS"/>
</dbReference>
<dbReference type="InterPro" id="IPR015424">
    <property type="entry name" value="PyrdxlP-dep_Trfase"/>
</dbReference>
<dbReference type="InterPro" id="IPR015421">
    <property type="entry name" value="PyrdxlP-dep_Trfase_major"/>
</dbReference>
<dbReference type="InterPro" id="IPR015422">
    <property type="entry name" value="PyrdxlP-dep_Trfase_small"/>
</dbReference>
<dbReference type="NCBIfam" id="NF005817">
    <property type="entry name" value="PRK07683.1"/>
    <property type="match status" value="1"/>
</dbReference>
<dbReference type="PANTHER" id="PTHR46383:SF4">
    <property type="entry name" value="AMINOTRANSFERASE"/>
    <property type="match status" value="1"/>
</dbReference>
<dbReference type="PANTHER" id="PTHR46383">
    <property type="entry name" value="ASPARTATE AMINOTRANSFERASE"/>
    <property type="match status" value="1"/>
</dbReference>
<dbReference type="Pfam" id="PF00155">
    <property type="entry name" value="Aminotran_1_2"/>
    <property type="match status" value="1"/>
</dbReference>
<dbReference type="SUPFAM" id="SSF53383">
    <property type="entry name" value="PLP-dependent transferases"/>
    <property type="match status" value="1"/>
</dbReference>
<dbReference type="PROSITE" id="PS00105">
    <property type="entry name" value="AA_TRANSFER_CLASS_1"/>
    <property type="match status" value="1"/>
</dbReference>